<evidence type="ECO:0000250" key="1">
    <source>
        <dbReference type="UniProtKB" id="Q9LSR8"/>
    </source>
</evidence>
<evidence type="ECO:0000255" key="2"/>
<evidence type="ECO:0000255" key="3">
    <source>
        <dbReference type="PROSITE-ProRule" id="PRU00159"/>
    </source>
</evidence>
<evidence type="ECO:0000269" key="4">
    <source>
    </source>
</evidence>
<evidence type="ECO:0000303" key="5">
    <source>
    </source>
</evidence>
<evidence type="ECO:0000305" key="6"/>
<evidence type="ECO:0000312" key="7">
    <source>
        <dbReference type="Araport" id="AT5G42120"/>
    </source>
</evidence>
<evidence type="ECO:0000312" key="8">
    <source>
        <dbReference type="EMBL" id="BAB08445.1"/>
    </source>
</evidence>
<proteinExistence type="evidence at transcript level"/>
<sequence length="691" mass="76556">MNHHHYSLVIFHLILFLSLDFPTLSHRFSPPLQNLTLYGDAFFRDRTISLTQQQPCFPSVTTPPSKPSSSGIGRALYVYPIKFLEPSTNTTASFSCRFSFSIIASPSCPFGDGFAFLITSNADSFVFSNGFLGLPNPDDSFIAVEFDTRFDPVHGDINDNHVGIDVSSIFSVSSVDAISKGFDLKSGKKMMAWIEYSDVLKLIRVWVGYSRVKPTSPVLSTQIDLSGKVKEYMHVGFSASNAGIGSALHIVERWKFRTFGSHSDAIQEEEEEKDEECLVCSGEVSENPKEIHRKGFNFRVTVVGLKIPVWSLLPGLAAIVILVAFIVFSLICGKKRISEEADSNSGLVRMPGRLSLAEIKSATSGFNENAIVGQGASATVYRGSIPSIGSVAVKRFDREHWPQCNRNPFTTEFTTMTGYLRHKNLVQFQGWCSEGTETALVFEYLPNGSLSEFLHKKPSSDPSEEIIVLSWKQRVNIILGVASALTYLHEECERQIIHRDVKTCNIMLDAEFNAKLGDFGLAEIYEHSALLAGRAATLPAGTMGYLAPEYVYTGVPSEKTDVYSFGVVVLEVCTGRRPVGDDGAVLVDLMWSHWETGKVLDGADIMLREEFDAEEMERVLMVGMVCAHPDSEKRPRVKDAVRIIRGEAPLPVLPARRPLLRIRPANEAEEMIVDGLVGEDLPWMTPKSHFS</sequence>
<protein>
    <recommendedName>
        <fullName evidence="5">L-type lectin-domain containing receptor kinase S.6</fullName>
        <shortName evidence="5">LecRK-S.6</shortName>
        <ecNumber evidence="3">2.7.11.1</ecNumber>
    </recommendedName>
</protein>
<keyword id="KW-0067">ATP-binding</keyword>
<keyword id="KW-1003">Cell membrane</keyword>
<keyword id="KW-0325">Glycoprotein</keyword>
<keyword id="KW-0418">Kinase</keyword>
<keyword id="KW-0430">Lectin</keyword>
<keyword id="KW-0472">Membrane</keyword>
<keyword id="KW-0547">Nucleotide-binding</keyword>
<keyword id="KW-0611">Plant defense</keyword>
<keyword id="KW-0675">Receptor</keyword>
<keyword id="KW-1185">Reference proteome</keyword>
<keyword id="KW-0723">Serine/threonine-protein kinase</keyword>
<keyword id="KW-0732">Signal</keyword>
<keyword id="KW-0808">Transferase</keyword>
<keyword id="KW-0812">Transmembrane</keyword>
<keyword id="KW-1133">Transmembrane helix</keyword>
<comment type="function">
    <text evidence="4">Involved in resistance response to the pathogenic oomycetes Phytophthora infestans and Phytophthora capsici and to the pathogenic bacteria Pseudomonas syringae.</text>
</comment>
<comment type="catalytic activity">
    <reaction evidence="3">
        <text>L-seryl-[protein] + ATP = O-phospho-L-seryl-[protein] + ADP + H(+)</text>
        <dbReference type="Rhea" id="RHEA:17989"/>
        <dbReference type="Rhea" id="RHEA-COMP:9863"/>
        <dbReference type="Rhea" id="RHEA-COMP:11604"/>
        <dbReference type="ChEBI" id="CHEBI:15378"/>
        <dbReference type="ChEBI" id="CHEBI:29999"/>
        <dbReference type="ChEBI" id="CHEBI:30616"/>
        <dbReference type="ChEBI" id="CHEBI:83421"/>
        <dbReference type="ChEBI" id="CHEBI:456216"/>
        <dbReference type="EC" id="2.7.11.1"/>
    </reaction>
</comment>
<comment type="catalytic activity">
    <reaction evidence="3">
        <text>L-threonyl-[protein] + ATP = O-phospho-L-threonyl-[protein] + ADP + H(+)</text>
        <dbReference type="Rhea" id="RHEA:46608"/>
        <dbReference type="Rhea" id="RHEA-COMP:11060"/>
        <dbReference type="Rhea" id="RHEA-COMP:11605"/>
        <dbReference type="ChEBI" id="CHEBI:15378"/>
        <dbReference type="ChEBI" id="CHEBI:30013"/>
        <dbReference type="ChEBI" id="CHEBI:30616"/>
        <dbReference type="ChEBI" id="CHEBI:61977"/>
        <dbReference type="ChEBI" id="CHEBI:456216"/>
        <dbReference type="EC" id="2.7.11.1"/>
    </reaction>
</comment>
<comment type="subcellular location">
    <subcellularLocation>
        <location evidence="1">Cell membrane</location>
        <topology evidence="2">Single-pass type I membrane protein</topology>
    </subcellularLocation>
</comment>
<comment type="disruption phenotype">
    <text evidence="4">Increased susceptibility to the oomycetes Phytophthora brassicae and Phytophthora capsici and to the bacteria Pseudomonas syringae, characterized by stronger necrotic symptoms.</text>
</comment>
<comment type="similarity">
    <text evidence="6">In the C-terminal section; belongs to the protein kinase superfamily. Ser/Thr protein kinase family.</text>
</comment>
<comment type="similarity">
    <text evidence="6">In the N-terminal section; belongs to the leguminous lectin family.</text>
</comment>
<gene>
    <name evidence="5" type="primary">LECRKS6</name>
    <name evidence="7" type="ordered locus">At5g42120</name>
    <name evidence="8" type="ORF">MJC20.23</name>
</gene>
<reference key="1">
    <citation type="journal article" date="1999" name="DNA Res.">
        <title>Structural analysis of Arabidopsis thaliana chromosome 5. IX. Sequence features of the regions of 1,011,550 bp covered by seventeen P1 and TAC clones.</title>
        <authorList>
            <person name="Kaneko T."/>
            <person name="Katoh T."/>
            <person name="Sato S."/>
            <person name="Nakamura Y."/>
            <person name="Asamizu E."/>
            <person name="Kotani H."/>
            <person name="Miyajima N."/>
            <person name="Tabata S."/>
        </authorList>
    </citation>
    <scope>NUCLEOTIDE SEQUENCE [LARGE SCALE GENOMIC DNA]</scope>
    <source>
        <strain>cv. Columbia</strain>
    </source>
</reference>
<reference key="2">
    <citation type="journal article" date="2017" name="Plant J.">
        <title>Araport11: a complete reannotation of the Arabidopsis thaliana reference genome.</title>
        <authorList>
            <person name="Cheng C.Y."/>
            <person name="Krishnakumar V."/>
            <person name="Chan A.P."/>
            <person name="Thibaud-Nissen F."/>
            <person name="Schobel S."/>
            <person name="Town C.D."/>
        </authorList>
    </citation>
    <scope>GENOME REANNOTATION</scope>
    <source>
        <strain>cv. Columbia</strain>
    </source>
</reference>
<reference key="3">
    <citation type="journal article" date="2006" name="Plant Biotechnol. J.">
        <title>Simultaneous high-throughput recombinational cloning of open reading frames in closed and open configurations.</title>
        <authorList>
            <person name="Underwood B.A."/>
            <person name="Vanderhaeghen R."/>
            <person name="Whitford R."/>
            <person name="Town C.D."/>
            <person name="Hilson P."/>
        </authorList>
    </citation>
    <scope>NUCLEOTIDE SEQUENCE [LARGE SCALE MRNA]</scope>
    <source>
        <strain>cv. Columbia</strain>
    </source>
</reference>
<reference key="4">
    <citation type="journal article" date="2002" name="Crit. Rev. Plant Sci.">
        <title>Lectin receptor kinases in plants.</title>
        <authorList>
            <person name="Barre A."/>
            <person name="Herve C."/>
            <person name="Lescure B."/>
            <person name="Rouge P."/>
        </authorList>
    </citation>
    <scope>GENE FAMILY</scope>
</reference>
<reference key="5">
    <citation type="journal article" date="2009" name="J. Exp. Bot.">
        <title>Arabidopsis L-type lectin receptor kinases: phylogeny, classification, and expression profiles.</title>
        <authorList>
            <person name="Bouwmeester K."/>
            <person name="Govers F."/>
        </authorList>
    </citation>
    <scope>GENE FAMILY</scope>
    <scope>NOMENCLATURE</scope>
</reference>
<reference key="6">
    <citation type="journal article" date="2014" name="Mol. Plant Microbe Interact.">
        <title>Phenotypic analyses of Arabidopsis T-DNA insertion lines and expression profiling reveal that multiple L-type lectin receptor kinases are involved in plant immunity.</title>
        <authorList>
            <person name="Wang Y."/>
            <person name="Bouwmeester K."/>
            <person name="Beseh P."/>
            <person name="Shan W."/>
            <person name="Govers F."/>
        </authorList>
    </citation>
    <scope>FUNCTION</scope>
    <scope>DISRUPTION PHENOTYPE</scope>
    <source>
        <strain>cv. Columbia</strain>
    </source>
</reference>
<name>LRKS6_ARATH</name>
<feature type="signal peptide" evidence="2">
    <location>
        <begin position="1"/>
        <end position="25"/>
    </location>
</feature>
<feature type="chain" id="PRO_0000403108" description="L-type lectin-domain containing receptor kinase S.6">
    <location>
        <begin position="26"/>
        <end position="691"/>
    </location>
</feature>
<feature type="topological domain" description="Extracellular" evidence="2">
    <location>
        <begin position="26"/>
        <end position="311"/>
    </location>
</feature>
<feature type="transmembrane region" description="Helical" evidence="2">
    <location>
        <begin position="312"/>
        <end position="332"/>
    </location>
</feature>
<feature type="topological domain" description="Cytoplasmic" evidence="2">
    <location>
        <begin position="333"/>
        <end position="691"/>
    </location>
</feature>
<feature type="domain" description="Protein kinase" evidence="3">
    <location>
        <begin position="366"/>
        <end position="653"/>
    </location>
</feature>
<feature type="region of interest" description="Legume-lectin like" evidence="2">
    <location>
        <begin position="27"/>
        <end position="257"/>
    </location>
</feature>
<feature type="active site" description="Proton acceptor" evidence="3">
    <location>
        <position position="500"/>
    </location>
</feature>
<feature type="binding site" evidence="3">
    <location>
        <begin position="372"/>
        <end position="380"/>
    </location>
    <ligand>
        <name>ATP</name>
        <dbReference type="ChEBI" id="CHEBI:30616"/>
    </ligand>
</feature>
<feature type="binding site" evidence="3">
    <location>
        <position position="394"/>
    </location>
    <ligand>
        <name>ATP</name>
        <dbReference type="ChEBI" id="CHEBI:30616"/>
    </ligand>
</feature>
<feature type="glycosylation site" description="N-linked (GlcNAc...) asparagine" evidence="2">
    <location>
        <position position="34"/>
    </location>
</feature>
<feature type="glycosylation site" description="N-linked (GlcNAc...) asparagine" evidence="2">
    <location>
        <position position="89"/>
    </location>
</feature>
<organism>
    <name type="scientific">Arabidopsis thaliana</name>
    <name type="common">Mouse-ear cress</name>
    <dbReference type="NCBI Taxonomy" id="3702"/>
    <lineage>
        <taxon>Eukaryota</taxon>
        <taxon>Viridiplantae</taxon>
        <taxon>Streptophyta</taxon>
        <taxon>Embryophyta</taxon>
        <taxon>Tracheophyta</taxon>
        <taxon>Spermatophyta</taxon>
        <taxon>Magnoliopsida</taxon>
        <taxon>eudicotyledons</taxon>
        <taxon>Gunneridae</taxon>
        <taxon>Pentapetalae</taxon>
        <taxon>rosids</taxon>
        <taxon>malvids</taxon>
        <taxon>Brassicales</taxon>
        <taxon>Brassicaceae</taxon>
        <taxon>Camelineae</taxon>
        <taxon>Arabidopsis</taxon>
    </lineage>
</organism>
<accession>Q9FHX3</accession>
<dbReference type="EC" id="2.7.11.1" evidence="3"/>
<dbReference type="EMBL" id="AB017067">
    <property type="protein sequence ID" value="BAB08445.1"/>
    <property type="molecule type" value="Genomic_DNA"/>
</dbReference>
<dbReference type="EMBL" id="CP002688">
    <property type="protein sequence ID" value="AED94770.1"/>
    <property type="molecule type" value="Genomic_DNA"/>
</dbReference>
<dbReference type="EMBL" id="DQ447030">
    <property type="protein sequence ID" value="ABE66214.1"/>
    <property type="molecule type" value="mRNA"/>
</dbReference>
<dbReference type="RefSeq" id="NP_199027.1">
    <property type="nucleotide sequence ID" value="NM_123577.2"/>
</dbReference>
<dbReference type="SMR" id="Q9FHX3"/>
<dbReference type="FunCoup" id="Q9FHX3">
    <property type="interactions" value="83"/>
</dbReference>
<dbReference type="GlyCosmos" id="Q9FHX3">
    <property type="glycosylation" value="2 sites, No reported glycans"/>
</dbReference>
<dbReference type="GlyGen" id="Q9FHX3">
    <property type="glycosylation" value="2 sites"/>
</dbReference>
<dbReference type="iPTMnet" id="Q9FHX3"/>
<dbReference type="PaxDb" id="3702-AT5G42120.1"/>
<dbReference type="ProteomicsDB" id="238570"/>
<dbReference type="EnsemblPlants" id="AT5G42120.1">
    <property type="protein sequence ID" value="AT5G42120.1"/>
    <property type="gene ID" value="AT5G42120"/>
</dbReference>
<dbReference type="GeneID" id="834217"/>
<dbReference type="Gramene" id="AT5G42120.1">
    <property type="protein sequence ID" value="AT5G42120.1"/>
    <property type="gene ID" value="AT5G42120"/>
</dbReference>
<dbReference type="KEGG" id="ath:AT5G42120"/>
<dbReference type="Araport" id="AT5G42120"/>
<dbReference type="TAIR" id="AT5G42120">
    <property type="gene designation" value="LECRK-S.6"/>
</dbReference>
<dbReference type="eggNOG" id="KOG1187">
    <property type="taxonomic scope" value="Eukaryota"/>
</dbReference>
<dbReference type="HOGENOM" id="CLU_000288_62_3_1"/>
<dbReference type="InParanoid" id="Q9FHX3"/>
<dbReference type="OMA" id="ATMVGCL"/>
<dbReference type="PhylomeDB" id="Q9FHX3"/>
<dbReference type="PRO" id="PR:Q9FHX3"/>
<dbReference type="Proteomes" id="UP000006548">
    <property type="component" value="Chromosome 5"/>
</dbReference>
<dbReference type="ExpressionAtlas" id="Q9FHX3">
    <property type="expression patterns" value="baseline and differential"/>
</dbReference>
<dbReference type="GO" id="GO:0005886">
    <property type="term" value="C:plasma membrane"/>
    <property type="evidence" value="ECO:0000250"/>
    <property type="project" value="UniProtKB"/>
</dbReference>
<dbReference type="GO" id="GO:0005524">
    <property type="term" value="F:ATP binding"/>
    <property type="evidence" value="ECO:0007669"/>
    <property type="project" value="UniProtKB-KW"/>
</dbReference>
<dbReference type="GO" id="GO:0030246">
    <property type="term" value="F:carbohydrate binding"/>
    <property type="evidence" value="ECO:0007669"/>
    <property type="project" value="UniProtKB-KW"/>
</dbReference>
<dbReference type="GO" id="GO:0106310">
    <property type="term" value="F:protein serine kinase activity"/>
    <property type="evidence" value="ECO:0007669"/>
    <property type="project" value="RHEA"/>
</dbReference>
<dbReference type="GO" id="GO:0004674">
    <property type="term" value="F:protein serine/threonine kinase activity"/>
    <property type="evidence" value="ECO:0007669"/>
    <property type="project" value="UniProtKB-KW"/>
</dbReference>
<dbReference type="GO" id="GO:0042742">
    <property type="term" value="P:defense response to bacterium"/>
    <property type="evidence" value="ECO:0000315"/>
    <property type="project" value="UniProtKB"/>
</dbReference>
<dbReference type="GO" id="GO:0002229">
    <property type="term" value="P:defense response to oomycetes"/>
    <property type="evidence" value="ECO:0000315"/>
    <property type="project" value="UniProtKB"/>
</dbReference>
<dbReference type="CDD" id="cd06899">
    <property type="entry name" value="lectin_legume_LecRK_Arcelin_ConA"/>
    <property type="match status" value="1"/>
</dbReference>
<dbReference type="CDD" id="cd14066">
    <property type="entry name" value="STKc_IRAK"/>
    <property type="match status" value="1"/>
</dbReference>
<dbReference type="FunFam" id="2.60.120.200:FF:000313">
    <property type="entry name" value="L-type lectin-domain containing receptor kinase S.6"/>
    <property type="match status" value="1"/>
</dbReference>
<dbReference type="FunFam" id="3.30.200.20:FF:000810">
    <property type="entry name" value="L-type lectin-domain containing receptor kinase S.6"/>
    <property type="match status" value="1"/>
</dbReference>
<dbReference type="FunFam" id="1.10.510.10:FF:000342">
    <property type="entry name" value="L-type lectin-domain containing receptor kinase VIII.1"/>
    <property type="match status" value="1"/>
</dbReference>
<dbReference type="Gene3D" id="2.60.120.200">
    <property type="match status" value="1"/>
</dbReference>
<dbReference type="Gene3D" id="3.30.200.20">
    <property type="entry name" value="Phosphorylase Kinase, domain 1"/>
    <property type="match status" value="1"/>
</dbReference>
<dbReference type="Gene3D" id="1.10.510.10">
    <property type="entry name" value="Transferase(Phosphotransferase) domain 1"/>
    <property type="match status" value="1"/>
</dbReference>
<dbReference type="InterPro" id="IPR013320">
    <property type="entry name" value="ConA-like_dom_sf"/>
</dbReference>
<dbReference type="InterPro" id="IPR011009">
    <property type="entry name" value="Kinase-like_dom_sf"/>
</dbReference>
<dbReference type="InterPro" id="IPR050528">
    <property type="entry name" value="L-type_Lectin-RKs"/>
</dbReference>
<dbReference type="InterPro" id="IPR019825">
    <property type="entry name" value="Lectin_legB_Mn/Ca_BS"/>
</dbReference>
<dbReference type="InterPro" id="IPR001220">
    <property type="entry name" value="Legume_lectin_dom"/>
</dbReference>
<dbReference type="InterPro" id="IPR000719">
    <property type="entry name" value="Prot_kinase_dom"/>
</dbReference>
<dbReference type="InterPro" id="IPR017441">
    <property type="entry name" value="Protein_kinase_ATP_BS"/>
</dbReference>
<dbReference type="InterPro" id="IPR001245">
    <property type="entry name" value="Ser-Thr/Tyr_kinase_cat_dom"/>
</dbReference>
<dbReference type="InterPro" id="IPR008271">
    <property type="entry name" value="Ser/Thr_kinase_AS"/>
</dbReference>
<dbReference type="PANTHER" id="PTHR27007">
    <property type="match status" value="1"/>
</dbReference>
<dbReference type="Pfam" id="PF00139">
    <property type="entry name" value="Lectin_legB"/>
    <property type="match status" value="1"/>
</dbReference>
<dbReference type="Pfam" id="PF07714">
    <property type="entry name" value="PK_Tyr_Ser-Thr"/>
    <property type="match status" value="1"/>
</dbReference>
<dbReference type="SMART" id="SM00220">
    <property type="entry name" value="S_TKc"/>
    <property type="match status" value="1"/>
</dbReference>
<dbReference type="SUPFAM" id="SSF49899">
    <property type="entry name" value="Concanavalin A-like lectins/glucanases"/>
    <property type="match status" value="1"/>
</dbReference>
<dbReference type="SUPFAM" id="SSF56112">
    <property type="entry name" value="Protein kinase-like (PK-like)"/>
    <property type="match status" value="1"/>
</dbReference>
<dbReference type="PROSITE" id="PS00307">
    <property type="entry name" value="LECTIN_LEGUME_BETA"/>
    <property type="match status" value="1"/>
</dbReference>
<dbReference type="PROSITE" id="PS00107">
    <property type="entry name" value="PROTEIN_KINASE_ATP"/>
    <property type="match status" value="1"/>
</dbReference>
<dbReference type="PROSITE" id="PS50011">
    <property type="entry name" value="PROTEIN_KINASE_DOM"/>
    <property type="match status" value="1"/>
</dbReference>
<dbReference type="PROSITE" id="PS00108">
    <property type="entry name" value="PROTEIN_KINASE_ST"/>
    <property type="match status" value="1"/>
</dbReference>